<gene>
    <name evidence="4" type="primary">cedA</name>
    <name type="synonym">ydjP</name>
    <name type="ordered locus">b1731</name>
    <name type="ordered locus">JW1720</name>
</gene>
<organism>
    <name type="scientific">Escherichia coli (strain K12)</name>
    <dbReference type="NCBI Taxonomy" id="83333"/>
    <lineage>
        <taxon>Bacteria</taxon>
        <taxon>Pseudomonadati</taxon>
        <taxon>Pseudomonadota</taxon>
        <taxon>Gammaproteobacteria</taxon>
        <taxon>Enterobacterales</taxon>
        <taxon>Enterobacteriaceae</taxon>
        <taxon>Escherichia</taxon>
    </lineage>
</organism>
<protein>
    <recommendedName>
        <fullName>Cell division activator CedA</fullName>
    </recommendedName>
</protein>
<evidence type="ECO:0000269" key="1">
    <source>
    </source>
</evidence>
<evidence type="ECO:0000269" key="2">
    <source>
    </source>
</evidence>
<evidence type="ECO:0000269" key="3">
    <source>
    </source>
</evidence>
<evidence type="ECO:0000303" key="4">
    <source>
    </source>
</evidence>
<evidence type="ECO:0000305" key="5"/>
<evidence type="ECO:0007744" key="6">
    <source>
        <dbReference type="PDB" id="2BN8"/>
    </source>
</evidence>
<evidence type="ECO:0007744" key="7">
    <source>
        <dbReference type="PDB" id="2D35"/>
    </source>
</evidence>
<evidence type="ECO:0007829" key="8">
    <source>
        <dbReference type="PDB" id="2BN8"/>
    </source>
</evidence>
<evidence type="ECO:0007829" key="9">
    <source>
        <dbReference type="PDB" id="2D35"/>
    </source>
</evidence>
<evidence type="ECO:0007829" key="10">
    <source>
        <dbReference type="PDB" id="8FTD"/>
    </source>
</evidence>
<proteinExistence type="evidence at protein level"/>
<name>CEDA_ECOLI</name>
<sequence length="80" mass="9377">MKKPLRQQNRQIISYVPRTEPAPPEHAIKMDSFRDVWMLRGKYVAFVLMGESFLRSPAFTVPESAQRWANQIRQEGEVTE</sequence>
<dbReference type="EMBL" id="U00096">
    <property type="protein sequence ID" value="AAC74801.2"/>
    <property type="molecule type" value="Genomic_DNA"/>
</dbReference>
<dbReference type="EMBL" id="AP009048">
    <property type="protein sequence ID" value="BAE76513.1"/>
    <property type="status" value="ALT_INIT"/>
    <property type="molecule type" value="Genomic_DNA"/>
</dbReference>
<dbReference type="PIR" id="C64932">
    <property type="entry name" value="C64932"/>
</dbReference>
<dbReference type="RefSeq" id="NP_416245.2">
    <property type="nucleotide sequence ID" value="NC_000913.3"/>
</dbReference>
<dbReference type="PDB" id="2BN8">
    <property type="method" value="NMR"/>
    <property type="chains" value="A=1-80"/>
</dbReference>
<dbReference type="PDB" id="2D35">
    <property type="method" value="NMR"/>
    <property type="chains" value="A=19-80"/>
</dbReference>
<dbReference type="PDB" id="8FTD">
    <property type="method" value="EM"/>
    <property type="resolution" value="2.76 A"/>
    <property type="chains" value="Z=1-80"/>
</dbReference>
<dbReference type="PDBsum" id="2BN8"/>
<dbReference type="PDBsum" id="2D35"/>
<dbReference type="PDBsum" id="8FTD"/>
<dbReference type="SMR" id="P0AE60"/>
<dbReference type="BioGRID" id="4260304">
    <property type="interactions" value="403"/>
</dbReference>
<dbReference type="DIP" id="DIP-47928N"/>
<dbReference type="FunCoup" id="P0AE60">
    <property type="interactions" value="52"/>
</dbReference>
<dbReference type="IntAct" id="P0AE60">
    <property type="interactions" value="14"/>
</dbReference>
<dbReference type="STRING" id="511145.b1731"/>
<dbReference type="jPOST" id="P0AE60"/>
<dbReference type="PaxDb" id="511145-b1731"/>
<dbReference type="EnsemblBacteria" id="AAC74801">
    <property type="protein sequence ID" value="AAC74801"/>
    <property type="gene ID" value="b1731"/>
</dbReference>
<dbReference type="GeneID" id="946235"/>
<dbReference type="KEGG" id="ecj:JW1720"/>
<dbReference type="KEGG" id="eco:b1731"/>
<dbReference type="KEGG" id="ecoc:C3026_09895"/>
<dbReference type="PATRIC" id="fig|511145.12.peg.1802"/>
<dbReference type="EchoBASE" id="EB3748"/>
<dbReference type="eggNOG" id="ENOG5032S26">
    <property type="taxonomic scope" value="Bacteria"/>
</dbReference>
<dbReference type="HOGENOM" id="CLU_167445_0_0_6"/>
<dbReference type="InParanoid" id="P0AE60"/>
<dbReference type="OMA" id="HAIKMDA"/>
<dbReference type="PhylomeDB" id="P0AE60"/>
<dbReference type="BioCyc" id="EcoCyc:G6936-MONOMER"/>
<dbReference type="EvolutionaryTrace" id="P0AE60"/>
<dbReference type="PRO" id="PR:P0AE60"/>
<dbReference type="Proteomes" id="UP000000625">
    <property type="component" value="Chromosome"/>
</dbReference>
<dbReference type="GO" id="GO:0003690">
    <property type="term" value="F:double-stranded DNA binding"/>
    <property type="evidence" value="ECO:0000314"/>
    <property type="project" value="EcoCyc"/>
</dbReference>
<dbReference type="GO" id="GO:0051301">
    <property type="term" value="P:cell division"/>
    <property type="evidence" value="ECO:0007669"/>
    <property type="project" value="UniProtKB-UniRule"/>
</dbReference>
<dbReference type="GO" id="GO:0051302">
    <property type="term" value="P:regulation of cell division"/>
    <property type="evidence" value="ECO:0000316"/>
    <property type="project" value="EcoCyc"/>
</dbReference>
<dbReference type="FunFam" id="3.30.730.20:FF:000001">
    <property type="entry name" value="Cell division activator CedA"/>
    <property type="match status" value="1"/>
</dbReference>
<dbReference type="Gene3D" id="3.30.730.20">
    <property type="entry name" value="Cell division activator CedA"/>
    <property type="match status" value="1"/>
</dbReference>
<dbReference type="HAMAP" id="MF_01580">
    <property type="entry name" value="CedA"/>
    <property type="match status" value="1"/>
</dbReference>
<dbReference type="InterPro" id="IPR038463">
    <property type="entry name" value="CedA-like_sf"/>
</dbReference>
<dbReference type="InterPro" id="IPR019666">
    <property type="entry name" value="Cell_div_activator_CedA"/>
</dbReference>
<dbReference type="NCBIfam" id="NF007510">
    <property type="entry name" value="PRK10113.1"/>
    <property type="match status" value="1"/>
</dbReference>
<dbReference type="Pfam" id="PF10729">
    <property type="entry name" value="CedA"/>
    <property type="match status" value="1"/>
</dbReference>
<comment type="function">
    <text evidence="3">Activates the cell division inhibited by chromosomal DNA over-replication.</text>
</comment>
<comment type="subunit">
    <text evidence="2">In pull-down experiments interacts with aceE, dnaK, glmS, lpp, rplB, rplC, rpoB, ybcJ, zwf.</text>
</comment>
<comment type="miscellaneous">
    <text evidence="1">In vitro, binds double-stranded DNA, but not single-stranded DNA.</text>
</comment>
<comment type="similarity">
    <text evidence="5">Belongs to the CedA family.</text>
</comment>
<comment type="sequence caution" evidence="5">
    <conflict type="erroneous initiation">
        <sequence resource="EMBL-CDS" id="BAE76513"/>
    </conflict>
    <text>Extended N-terminus.</text>
</comment>
<reference key="1">
    <citation type="journal article" date="1997" name="Science">
        <title>The complete genome sequence of Escherichia coli K-12.</title>
        <authorList>
            <person name="Blattner F.R."/>
            <person name="Plunkett G. III"/>
            <person name="Bloch C.A."/>
            <person name="Perna N.T."/>
            <person name="Burland V."/>
            <person name="Riley M."/>
            <person name="Collado-Vides J."/>
            <person name="Glasner J.D."/>
            <person name="Rode C.K."/>
            <person name="Mayhew G.F."/>
            <person name="Gregor J."/>
            <person name="Davis N.W."/>
            <person name="Kirkpatrick H.A."/>
            <person name="Goeden M.A."/>
            <person name="Rose D.J."/>
            <person name="Mau B."/>
            <person name="Shao Y."/>
        </authorList>
    </citation>
    <scope>NUCLEOTIDE SEQUENCE [LARGE SCALE GENOMIC DNA]</scope>
    <source>
        <strain>K12 / MG1655 / ATCC 47076</strain>
    </source>
</reference>
<reference key="2">
    <citation type="journal article" date="2006" name="Mol. Syst. Biol.">
        <title>Highly accurate genome sequences of Escherichia coli K-12 strains MG1655 and W3110.</title>
        <authorList>
            <person name="Hayashi K."/>
            <person name="Morooka N."/>
            <person name="Yamamoto Y."/>
            <person name="Fujita K."/>
            <person name="Isono K."/>
            <person name="Choi S."/>
            <person name="Ohtsubo E."/>
            <person name="Baba T."/>
            <person name="Wanner B.L."/>
            <person name="Mori H."/>
            <person name="Horiuchi T."/>
        </authorList>
    </citation>
    <scope>NUCLEOTIDE SEQUENCE [LARGE SCALE GENOMIC DNA]</scope>
    <source>
        <strain>K12 / W3110 / ATCC 27325 / DSM 5911</strain>
    </source>
</reference>
<reference key="3">
    <citation type="journal article" date="1997" name="Mol. Microbiol.">
        <title>CedA is a novel Escherichia coli protein that activates the cell division inhibited by chromosomal DNA over-replication.</title>
        <authorList>
            <person name="Katayama T."/>
            <person name="Takata M."/>
            <person name="Sekimizu K."/>
        </authorList>
    </citation>
    <scope>FUNCTION</scope>
</reference>
<reference key="4">
    <citation type="journal article" date="2018" name="Int. J. Biol. Macromol.">
        <title>Identification of functional interactome of a key cell division regulatory protein CedA of E.coli.</title>
        <authorList>
            <person name="Sharma P."/>
            <person name="Tomar A.K."/>
            <person name="Kundu B."/>
        </authorList>
    </citation>
    <scope>INTERACTOME</scope>
</reference>
<reference evidence="6" key="5">
    <citation type="journal article" date="2005" name="Biochemistry">
        <title>Solution structure and interactions of the Escherichia coli cell division activator protein CedA.</title>
        <authorList>
            <person name="Chen H.A."/>
            <person name="Simpson P."/>
            <person name="Huyton T."/>
            <person name="Roper D."/>
            <person name="Matthews S."/>
        </authorList>
    </citation>
    <scope>STRUCTURE BY NMR</scope>
    <scope>DNA-BINDING</scope>
</reference>
<reference evidence="7" key="6">
    <citation type="submission" date="2005-09" db="PDB data bank">
        <title>Structural analysis and molecular interaction of cell division reactivation factor, cedA from Escherichia coli.</title>
        <authorList>
            <person name="Abe Y."/>
            <person name="Watanabe N."/>
            <person name="Matsuda Y."/>
            <person name="Yoshida Y."/>
            <person name="Katayama T."/>
            <person name="Ueda T."/>
        </authorList>
    </citation>
    <scope>STRUCTURE BY NMR OF 19-80</scope>
</reference>
<accession>P0AE60</accession>
<accession>P76211</accession>
<accession>Q2MB43</accession>
<feature type="chain" id="PRO_0000089471" description="Cell division activator CedA">
    <location>
        <begin position="1"/>
        <end position="80"/>
    </location>
</feature>
<feature type="turn" evidence="8">
    <location>
        <begin position="30"/>
        <end position="32"/>
    </location>
</feature>
<feature type="strand" evidence="8">
    <location>
        <begin position="36"/>
        <end position="39"/>
    </location>
</feature>
<feature type="strand" evidence="9">
    <location>
        <begin position="40"/>
        <end position="43"/>
    </location>
</feature>
<feature type="strand" evidence="10">
    <location>
        <begin position="46"/>
        <end position="49"/>
    </location>
</feature>
<feature type="strand" evidence="10">
    <location>
        <begin position="52"/>
        <end position="55"/>
    </location>
</feature>
<feature type="strand" evidence="8">
    <location>
        <begin position="59"/>
        <end position="61"/>
    </location>
</feature>
<feature type="helix" evidence="10">
    <location>
        <begin position="62"/>
        <end position="75"/>
    </location>
</feature>
<keyword id="KW-0002">3D-structure</keyword>
<keyword id="KW-0131">Cell cycle</keyword>
<keyword id="KW-0132">Cell division</keyword>
<keyword id="KW-0238">DNA-binding</keyword>
<keyword id="KW-1185">Reference proteome</keyword>